<gene>
    <name evidence="5" type="primary">SUN4</name>
    <name evidence="7" type="ordered locus">At1g71360</name>
    <name evidence="8" type="ORF">F26A9.26</name>
</gene>
<name>SUN4_ARATH</name>
<proteinExistence type="evidence at protein level"/>
<accession>F4I8I0</accession>
<accession>Q0WQI7</accession>
<accession>Q9C9H3</accession>
<reference key="1">
    <citation type="journal article" date="2000" name="Nature">
        <title>Sequence and analysis of chromosome 1 of the plant Arabidopsis thaliana.</title>
        <authorList>
            <person name="Theologis A."/>
            <person name="Ecker J.R."/>
            <person name="Palm C.J."/>
            <person name="Federspiel N.A."/>
            <person name="Kaul S."/>
            <person name="White O."/>
            <person name="Alonso J."/>
            <person name="Altafi H."/>
            <person name="Araujo R."/>
            <person name="Bowman C.L."/>
            <person name="Brooks S.Y."/>
            <person name="Buehler E."/>
            <person name="Chan A."/>
            <person name="Chao Q."/>
            <person name="Chen H."/>
            <person name="Cheuk R.F."/>
            <person name="Chin C.W."/>
            <person name="Chung M.K."/>
            <person name="Conn L."/>
            <person name="Conway A.B."/>
            <person name="Conway A.R."/>
            <person name="Creasy T.H."/>
            <person name="Dewar K."/>
            <person name="Dunn P."/>
            <person name="Etgu P."/>
            <person name="Feldblyum T.V."/>
            <person name="Feng J.-D."/>
            <person name="Fong B."/>
            <person name="Fujii C.Y."/>
            <person name="Gill J.E."/>
            <person name="Goldsmith A.D."/>
            <person name="Haas B."/>
            <person name="Hansen N.F."/>
            <person name="Hughes B."/>
            <person name="Huizar L."/>
            <person name="Hunter J.L."/>
            <person name="Jenkins J."/>
            <person name="Johnson-Hopson C."/>
            <person name="Khan S."/>
            <person name="Khaykin E."/>
            <person name="Kim C.J."/>
            <person name="Koo H.L."/>
            <person name="Kremenetskaia I."/>
            <person name="Kurtz D.B."/>
            <person name="Kwan A."/>
            <person name="Lam B."/>
            <person name="Langin-Hooper S."/>
            <person name="Lee A."/>
            <person name="Lee J.M."/>
            <person name="Lenz C.A."/>
            <person name="Li J.H."/>
            <person name="Li Y.-P."/>
            <person name="Lin X."/>
            <person name="Liu S.X."/>
            <person name="Liu Z.A."/>
            <person name="Luros J.S."/>
            <person name="Maiti R."/>
            <person name="Marziali A."/>
            <person name="Militscher J."/>
            <person name="Miranda M."/>
            <person name="Nguyen M."/>
            <person name="Nierman W.C."/>
            <person name="Osborne B.I."/>
            <person name="Pai G."/>
            <person name="Peterson J."/>
            <person name="Pham P.K."/>
            <person name="Rizzo M."/>
            <person name="Rooney T."/>
            <person name="Rowley D."/>
            <person name="Sakano H."/>
            <person name="Salzberg S.L."/>
            <person name="Schwartz J.R."/>
            <person name="Shinn P."/>
            <person name="Southwick A.M."/>
            <person name="Sun H."/>
            <person name="Tallon L.J."/>
            <person name="Tambunga G."/>
            <person name="Toriumi M.J."/>
            <person name="Town C.D."/>
            <person name="Utterback T."/>
            <person name="Van Aken S."/>
            <person name="Vaysberg M."/>
            <person name="Vysotskaia V.S."/>
            <person name="Walker M."/>
            <person name="Wu D."/>
            <person name="Yu G."/>
            <person name="Fraser C.M."/>
            <person name="Venter J.C."/>
            <person name="Davis R.W."/>
        </authorList>
    </citation>
    <scope>NUCLEOTIDE SEQUENCE [LARGE SCALE GENOMIC DNA]</scope>
    <source>
        <strain>cv. Columbia</strain>
    </source>
</reference>
<reference key="2">
    <citation type="journal article" date="2017" name="Plant J.">
        <title>Araport11: a complete reannotation of the Arabidopsis thaliana reference genome.</title>
        <authorList>
            <person name="Cheng C.Y."/>
            <person name="Krishnakumar V."/>
            <person name="Chan A.P."/>
            <person name="Thibaud-Nissen F."/>
            <person name="Schobel S."/>
            <person name="Town C.D."/>
        </authorList>
    </citation>
    <scope>GENOME REANNOTATION</scope>
    <source>
        <strain>cv. Columbia</strain>
    </source>
</reference>
<reference key="3">
    <citation type="submission" date="2006-07" db="EMBL/GenBank/DDBJ databases">
        <title>Large-scale analysis of RIKEN Arabidopsis full-length (RAFL) cDNAs.</title>
        <authorList>
            <person name="Totoki Y."/>
            <person name="Seki M."/>
            <person name="Ishida J."/>
            <person name="Nakajima M."/>
            <person name="Enju A."/>
            <person name="Kamiya A."/>
            <person name="Narusaka M."/>
            <person name="Shin-i T."/>
            <person name="Nakagawa M."/>
            <person name="Sakamoto N."/>
            <person name="Oishi K."/>
            <person name="Kohara Y."/>
            <person name="Kobayashi M."/>
            <person name="Toyoda A."/>
            <person name="Sakaki Y."/>
            <person name="Sakurai T."/>
            <person name="Iida K."/>
            <person name="Akiyama K."/>
            <person name="Satou M."/>
            <person name="Toyoda T."/>
            <person name="Konagaya A."/>
            <person name="Carninci P."/>
            <person name="Kawai J."/>
            <person name="Hayashizaki Y."/>
            <person name="Shinozaki K."/>
        </authorList>
    </citation>
    <scope>NUCLEOTIDE SEQUENCE [LARGE SCALE MRNA] (ISOFORM 2)</scope>
    <source>
        <strain>cv. Columbia</strain>
    </source>
</reference>
<reference key="4">
    <citation type="journal article" date="2014" name="J. Exp. Bot.">
        <title>Characterization of two distinct subfamilies of SUN-domain proteins in Arabidopsis and their interactions with the novel KASH-domain protein AtTIK.</title>
        <authorList>
            <person name="Graumann K."/>
            <person name="Vanrobays E."/>
            <person name="Tutois S."/>
            <person name="Probst A.V."/>
            <person name="Evans D.E."/>
            <person name="Tatout C."/>
        </authorList>
    </citation>
    <scope>SUBCELLULAR LOCATION</scope>
    <scope>SUBUNIT</scope>
    <scope>INTERACTION WITH SUN1; SUN2; SUN3 AND TIK</scope>
    <scope>DISRUPTION PHENOTYPE</scope>
</reference>
<reference key="5">
    <citation type="journal article" date="2015" name="J. Exp. Bot.">
        <title>The plant nuclear envelope as a multifunctional platform LINCed by SUN and KASH.</title>
        <authorList>
            <person name="Zhou X."/>
            <person name="Graumann K."/>
            <person name="Meier I."/>
        </authorList>
    </citation>
    <scope>REVIEW</scope>
</reference>
<feature type="chain" id="PRO_0000441679" description="SUN domain-containing protein 4">
    <location>
        <begin position="1"/>
        <end position="596"/>
    </location>
</feature>
<feature type="transmembrane region" description="Helical" evidence="1">
    <location>
        <begin position="28"/>
        <end position="48"/>
    </location>
</feature>
<feature type="transmembrane region" description="Helical" evidence="1">
    <location>
        <begin position="545"/>
        <end position="565"/>
    </location>
</feature>
<feature type="transmembrane region" description="Helical" evidence="1">
    <location>
        <begin position="576"/>
        <end position="596"/>
    </location>
</feature>
<feature type="domain" description="SUN" evidence="2">
    <location>
        <begin position="179"/>
        <end position="343"/>
    </location>
</feature>
<feature type="region of interest" description="Disordered" evidence="3">
    <location>
        <begin position="58"/>
        <end position="98"/>
    </location>
</feature>
<feature type="region of interest" description="Disordered" evidence="3">
    <location>
        <begin position="139"/>
        <end position="158"/>
    </location>
</feature>
<feature type="region of interest" description="Disordered" evidence="3">
    <location>
        <begin position="366"/>
        <end position="410"/>
    </location>
</feature>
<feature type="coiled-coil region" evidence="1">
    <location>
        <begin position="475"/>
        <end position="544"/>
    </location>
</feature>
<feature type="compositionally biased region" description="Acidic residues" evidence="3">
    <location>
        <begin position="66"/>
        <end position="77"/>
    </location>
</feature>
<feature type="compositionally biased region" description="Polar residues" evidence="3">
    <location>
        <begin position="80"/>
        <end position="95"/>
    </location>
</feature>
<feature type="compositionally biased region" description="Polar residues" evidence="3">
    <location>
        <begin position="141"/>
        <end position="158"/>
    </location>
</feature>
<feature type="compositionally biased region" description="Basic and acidic residues" evidence="3">
    <location>
        <begin position="366"/>
        <end position="396"/>
    </location>
</feature>
<feature type="splice variant" id="VSP_059087" description="In isoform 2.">
    <location>
        <begin position="368"/>
        <end position="520"/>
    </location>
</feature>
<dbReference type="EMBL" id="AC016163">
    <property type="protein sequence ID" value="AAG51822.1"/>
    <property type="status" value="ALT_SEQ"/>
    <property type="molecule type" value="Genomic_DNA"/>
</dbReference>
<dbReference type="EMBL" id="CP002684">
    <property type="protein sequence ID" value="AEE35193.1"/>
    <property type="molecule type" value="Genomic_DNA"/>
</dbReference>
<dbReference type="EMBL" id="AK228709">
    <property type="protein sequence ID" value="BAF00612.1"/>
    <property type="molecule type" value="mRNA"/>
</dbReference>
<dbReference type="RefSeq" id="NP_177292.4">
    <molecule id="F4I8I0-1"/>
    <property type="nucleotide sequence ID" value="NM_105805.6"/>
</dbReference>
<dbReference type="SMR" id="F4I8I0"/>
<dbReference type="FunCoup" id="F4I8I0">
    <property type="interactions" value="184"/>
</dbReference>
<dbReference type="STRING" id="3702.F4I8I0"/>
<dbReference type="iPTMnet" id="F4I8I0"/>
<dbReference type="PaxDb" id="3702-AT1G71360.1"/>
<dbReference type="EnsemblPlants" id="AT1G71360.1">
    <molecule id="F4I8I0-1"/>
    <property type="protein sequence ID" value="AT1G71360.1"/>
    <property type="gene ID" value="AT1G71360"/>
</dbReference>
<dbReference type="GeneID" id="843477"/>
<dbReference type="Gramene" id="AT1G71360.1">
    <molecule id="F4I8I0-1"/>
    <property type="protein sequence ID" value="AT1G71360.1"/>
    <property type="gene ID" value="AT1G71360"/>
</dbReference>
<dbReference type="KEGG" id="ath:AT1G71360"/>
<dbReference type="Araport" id="AT1G71360"/>
<dbReference type="TAIR" id="AT1G71360">
    <property type="gene designation" value="SUN4"/>
</dbReference>
<dbReference type="eggNOG" id="KOG1396">
    <property type="taxonomic scope" value="Eukaryota"/>
</dbReference>
<dbReference type="HOGENOM" id="CLU_022850_2_0_1"/>
<dbReference type="InParanoid" id="F4I8I0"/>
<dbReference type="OMA" id="DSWKSHI"/>
<dbReference type="PRO" id="PR:F4I8I0"/>
<dbReference type="Proteomes" id="UP000006548">
    <property type="component" value="Chromosome 1"/>
</dbReference>
<dbReference type="ExpressionAtlas" id="F4I8I0">
    <property type="expression patterns" value="baseline and differential"/>
</dbReference>
<dbReference type="GO" id="GO:0005783">
    <property type="term" value="C:endoplasmic reticulum"/>
    <property type="evidence" value="ECO:0000314"/>
    <property type="project" value="TAIR"/>
</dbReference>
<dbReference type="GO" id="GO:0005789">
    <property type="term" value="C:endoplasmic reticulum membrane"/>
    <property type="evidence" value="ECO:0007669"/>
    <property type="project" value="UniProtKB-SubCell"/>
</dbReference>
<dbReference type="GO" id="GO:0005635">
    <property type="term" value="C:nuclear envelope"/>
    <property type="evidence" value="ECO:0000314"/>
    <property type="project" value="TAIR"/>
</dbReference>
<dbReference type="GO" id="GO:0031965">
    <property type="term" value="C:nuclear membrane"/>
    <property type="evidence" value="ECO:0007669"/>
    <property type="project" value="UniProtKB-SubCell"/>
</dbReference>
<dbReference type="GO" id="GO:0006997">
    <property type="term" value="P:nucleus organization"/>
    <property type="evidence" value="ECO:0000316"/>
    <property type="project" value="TAIR"/>
</dbReference>
<dbReference type="FunFam" id="2.60.120.260:FF:000062">
    <property type="entry name" value="Galactose-binding protein isoform 3"/>
    <property type="match status" value="1"/>
</dbReference>
<dbReference type="Gene3D" id="2.60.120.260">
    <property type="entry name" value="Galactose-binding domain-like"/>
    <property type="match status" value="1"/>
</dbReference>
<dbReference type="InterPro" id="IPR008979">
    <property type="entry name" value="Galactose-bd-like_sf"/>
</dbReference>
<dbReference type="InterPro" id="IPR045120">
    <property type="entry name" value="Suco/Slp1-like"/>
</dbReference>
<dbReference type="InterPro" id="IPR012919">
    <property type="entry name" value="SUN_dom"/>
</dbReference>
<dbReference type="PANTHER" id="PTHR12953">
    <property type="entry name" value="MEMBRANE PROTEIN CH1 RELATED"/>
    <property type="match status" value="1"/>
</dbReference>
<dbReference type="PANTHER" id="PTHR12953:SF2">
    <property type="entry name" value="SUN DOMAIN-CONTAINING PROTEIN 4"/>
    <property type="match status" value="1"/>
</dbReference>
<dbReference type="Pfam" id="PF07738">
    <property type="entry name" value="Sad1_UNC"/>
    <property type="match status" value="1"/>
</dbReference>
<dbReference type="SUPFAM" id="SSF49785">
    <property type="entry name" value="Galactose-binding domain-like"/>
    <property type="match status" value="1"/>
</dbReference>
<dbReference type="PROSITE" id="PS51469">
    <property type="entry name" value="SUN"/>
    <property type="match status" value="1"/>
</dbReference>
<sequence>MQRSRRALLVRRRVSETTSNGRNRFYKVSLSLVFLIWGLVFLSTLWISHVDGDKGRSLVDSVEKGEPDDERADETAESVDATSLESTSVHSNPGLSSDVDIAAAGESKGSETILKQLEVDNTIVIVGNVTESKDNVPMKQSEINNNTVPGNDTETTGSKLDQLSRAVPLGLDEFKSRASNSRDKSLSGQVTGVIHRMEPGGKEYNYAAASKGAKVLSSNKEAKGASSIICRDKDKYLRNPCSTEGKFVVIELSEETLVNTIKIANFEHYSSNLKDFEILGTLVYPTDTWVHLGNFTALNMKHEQNFTFADPKWVRYLKLNLLSHYGSEFYCTLSLLEVYGVDAVERMLEDLISIQDKNILKLQEGDTEQKEKKTMQAKESFESDEDKSKQKEKEQEASPENAVVKDEVSLEKRKLPDPVEEIKHQPGSRMPGDTVLKILMQKIRSLDVSLSVLESYLEERSLKYGMIFKEMDLEASKREKEVETMRLEVEGMKEREENTKKEAMEMRKWRMRVETELEKAENEKEKVKERLEQVLERLEWMEKKGVVVFTICVGFGTIAVVAVVFGMGIVRAEKQGGLAWLLLLISSTFVMFILSL</sequence>
<keyword id="KW-0025">Alternative splicing</keyword>
<keyword id="KW-0175">Coiled coil</keyword>
<keyword id="KW-0256">Endoplasmic reticulum</keyword>
<keyword id="KW-0472">Membrane</keyword>
<keyword id="KW-0539">Nucleus</keyword>
<keyword id="KW-1185">Reference proteome</keyword>
<keyword id="KW-0812">Transmembrane</keyword>
<keyword id="KW-1133">Transmembrane helix</keyword>
<organism>
    <name type="scientific">Arabidopsis thaliana</name>
    <name type="common">Mouse-ear cress</name>
    <dbReference type="NCBI Taxonomy" id="3702"/>
    <lineage>
        <taxon>Eukaryota</taxon>
        <taxon>Viridiplantae</taxon>
        <taxon>Streptophyta</taxon>
        <taxon>Embryophyta</taxon>
        <taxon>Tracheophyta</taxon>
        <taxon>Spermatophyta</taxon>
        <taxon>Magnoliopsida</taxon>
        <taxon>eudicotyledons</taxon>
        <taxon>Gunneridae</taxon>
        <taxon>Pentapetalae</taxon>
        <taxon>rosids</taxon>
        <taxon>malvids</taxon>
        <taxon>Brassicales</taxon>
        <taxon>Brassicaceae</taxon>
        <taxon>Camelineae</taxon>
        <taxon>Arabidopsis</taxon>
    </lineage>
</organism>
<protein>
    <recommendedName>
        <fullName evidence="6">SUN domain-containing protein 4</fullName>
        <shortName evidence="5">AtSUN4</shortName>
    </recommendedName>
</protein>
<comment type="function">
    <text>Encodes a member of the mid-SUN subfamily of SUN-domain proteins that is localized to both the nuclear envelope and the ER. It is involved in early seed development and nuclear morphology. [TAIR].</text>
</comment>
<comment type="subunit">
    <text evidence="4">Forms homomers and heteromers with SUN3. Interacts with SUN1, SUN2 and TIK.</text>
</comment>
<comment type="subcellular location">
    <subcellularLocation>
        <location evidence="4">Nucleus membrane</location>
        <topology evidence="1">Multi-pass membrane protein</topology>
    </subcellularLocation>
    <subcellularLocation>
        <location evidence="4">Endoplasmic reticulum membrane</location>
        <topology evidence="1">Multi-pass membrane protein</topology>
    </subcellularLocation>
</comment>
<comment type="alternative products">
    <event type="alternative splicing"/>
    <isoform>
        <id>F4I8I0-1</id>
        <name>1</name>
        <sequence type="displayed"/>
    </isoform>
    <isoform>
        <id>F4I8I0-2</id>
        <name>2</name>
        <sequence type="described" ref="VSP_059087"/>
    </isoform>
</comment>
<comment type="disruption phenotype">
    <text evidence="4">No visible phenotype. Embryo lethal when associated with disruption mutants SUN3 and SUN5.</text>
</comment>
<comment type="sequence caution" evidence="6">
    <conflict type="erroneous gene model prediction">
        <sequence resource="EMBL-CDS" id="AAG51822"/>
    </conflict>
</comment>
<evidence type="ECO:0000255" key="1"/>
<evidence type="ECO:0000255" key="2">
    <source>
        <dbReference type="PROSITE-ProRule" id="PRU00802"/>
    </source>
</evidence>
<evidence type="ECO:0000256" key="3">
    <source>
        <dbReference type="SAM" id="MobiDB-lite"/>
    </source>
</evidence>
<evidence type="ECO:0000269" key="4">
    <source>
    </source>
</evidence>
<evidence type="ECO:0000303" key="5">
    <source>
    </source>
</evidence>
<evidence type="ECO:0000305" key="6"/>
<evidence type="ECO:0000312" key="7">
    <source>
        <dbReference type="Araport" id="AT1G71360"/>
    </source>
</evidence>
<evidence type="ECO:0000312" key="8">
    <source>
        <dbReference type="EMBL" id="AAG51822.1"/>
    </source>
</evidence>